<accession>P34423</accession>
<proteinExistence type="predicted"/>
<dbReference type="EMBL" id="FO080400">
    <property type="protein sequence ID" value="CCD63442.1"/>
    <property type="molecule type" value="Genomic_DNA"/>
</dbReference>
<dbReference type="PIR" id="S44811">
    <property type="entry name" value="S44811"/>
</dbReference>
<dbReference type="RefSeq" id="NP_498748.1">
    <property type="nucleotide sequence ID" value="NM_066347.6"/>
</dbReference>
<dbReference type="FunCoup" id="P34423">
    <property type="interactions" value="84"/>
</dbReference>
<dbReference type="STRING" id="6239.F44B9.2.1"/>
<dbReference type="iPTMnet" id="P34423"/>
<dbReference type="PaxDb" id="6239-F44B9.2"/>
<dbReference type="PeptideAtlas" id="P34423"/>
<dbReference type="EnsemblMetazoa" id="F44B9.2.1">
    <property type="protein sequence ID" value="F44B9.2.1"/>
    <property type="gene ID" value="WBGene00018407"/>
</dbReference>
<dbReference type="GeneID" id="176129"/>
<dbReference type="KEGG" id="cel:CELE_F44B9.2"/>
<dbReference type="UCSC" id="F44B9.2">
    <property type="organism name" value="c. elegans"/>
</dbReference>
<dbReference type="AGR" id="WB:WBGene00018407"/>
<dbReference type="CTD" id="176129"/>
<dbReference type="WormBase" id="F44B9.2">
    <property type="protein sequence ID" value="CE00171"/>
    <property type="gene ID" value="WBGene00018407"/>
</dbReference>
<dbReference type="eggNOG" id="ENOG502SP2J">
    <property type="taxonomic scope" value="Eukaryota"/>
</dbReference>
<dbReference type="HOGENOM" id="CLU_492792_0_0_1"/>
<dbReference type="InParanoid" id="P34423"/>
<dbReference type="OMA" id="QWTELEY"/>
<dbReference type="OrthoDB" id="5861088at2759"/>
<dbReference type="PRO" id="PR:P34423"/>
<dbReference type="Proteomes" id="UP000001940">
    <property type="component" value="Chromosome III"/>
</dbReference>
<dbReference type="Bgee" id="WBGene00018407">
    <property type="expression patterns" value="Expressed in larva and 3 other cell types or tissues"/>
</dbReference>
<gene>
    <name type="ORF">F44B9.2</name>
</gene>
<evidence type="ECO:0000256" key="1">
    <source>
        <dbReference type="SAM" id="MobiDB-lite"/>
    </source>
</evidence>
<name>YL32_CAEEL</name>
<protein>
    <recommendedName>
        <fullName>Uncharacterized protein F44B9.2</fullName>
    </recommendedName>
</protein>
<feature type="chain" id="PRO_0000065339" description="Uncharacterized protein F44B9.2">
    <location>
        <begin position="1"/>
        <end position="503"/>
    </location>
</feature>
<feature type="region of interest" description="Disordered" evidence="1">
    <location>
        <begin position="1"/>
        <end position="26"/>
    </location>
</feature>
<feature type="region of interest" description="Disordered" evidence="1">
    <location>
        <begin position="132"/>
        <end position="156"/>
    </location>
</feature>
<feature type="compositionally biased region" description="Low complexity" evidence="1">
    <location>
        <begin position="16"/>
        <end position="26"/>
    </location>
</feature>
<feature type="compositionally biased region" description="Polar residues" evidence="1">
    <location>
        <begin position="147"/>
        <end position="156"/>
    </location>
</feature>
<reference key="1">
    <citation type="journal article" date="1994" name="Nature">
        <title>2.2 Mb of contiguous nucleotide sequence from chromosome III of C. elegans.</title>
        <authorList>
            <person name="Wilson R."/>
            <person name="Ainscough R."/>
            <person name="Anderson K."/>
            <person name="Baynes C."/>
            <person name="Berks M."/>
            <person name="Bonfield J."/>
            <person name="Burton J."/>
            <person name="Connell M."/>
            <person name="Copsey T."/>
            <person name="Cooper J."/>
            <person name="Coulson A."/>
            <person name="Craxton M."/>
            <person name="Dear S."/>
            <person name="Du Z."/>
            <person name="Durbin R."/>
            <person name="Favello A."/>
            <person name="Fraser A."/>
            <person name="Fulton L."/>
            <person name="Gardner A."/>
            <person name="Green P."/>
            <person name="Hawkins T."/>
            <person name="Hillier L."/>
            <person name="Jier M."/>
            <person name="Johnston L."/>
            <person name="Jones M."/>
            <person name="Kershaw J."/>
            <person name="Kirsten J."/>
            <person name="Laisster N."/>
            <person name="Latreille P."/>
            <person name="Lightning J."/>
            <person name="Lloyd C."/>
            <person name="Mortimore B."/>
            <person name="O'Callaghan M."/>
            <person name="Parsons J."/>
            <person name="Percy C."/>
            <person name="Rifken L."/>
            <person name="Roopra A."/>
            <person name="Saunders D."/>
            <person name="Shownkeen R."/>
            <person name="Sims M."/>
            <person name="Smaldon N."/>
            <person name="Smith A."/>
            <person name="Smith M."/>
            <person name="Sonnhammer E."/>
            <person name="Staden R."/>
            <person name="Sulston J."/>
            <person name="Thierry-Mieg J."/>
            <person name="Thomas K."/>
            <person name="Vaudin M."/>
            <person name="Vaughan K."/>
            <person name="Waterston R."/>
            <person name="Watson A."/>
            <person name="Weinstock L."/>
            <person name="Wilkinson-Sproat J."/>
            <person name="Wohldman P."/>
        </authorList>
    </citation>
    <scope>NUCLEOTIDE SEQUENCE [LARGE SCALE GENOMIC DNA]</scope>
    <source>
        <strain>Bristol N2</strain>
    </source>
</reference>
<reference key="2">
    <citation type="journal article" date="1998" name="Science">
        <title>Genome sequence of the nematode C. elegans: a platform for investigating biology.</title>
        <authorList>
            <consortium name="The C. elegans sequencing consortium"/>
        </authorList>
    </citation>
    <scope>NUCLEOTIDE SEQUENCE [LARGE SCALE GENOMIC DNA]</scope>
    <source>
        <strain>Bristol N2</strain>
    </source>
</reference>
<sequence>MADDEDDIVWIREDTAQSSVPTSPTTPATIIEAAPVLSDAFDKPILKSVETISVSNGPPEVTISAPPPTPPAAPLAPQITPMVLSTVPDAAPAQDIPALILAALAPEPVPEPEPEVEAKQNVIVEKENEIKDQQQNDQLSAKLDPKTPNSVDDNSMSFDISECERKFNTAIREANDILEDFDKKSKQVAENTKFVAKELAELAADAPRVFQKTIEDHSQVPEISELPSGGLPKNVESVLIGEGILEEITGTLVLPTGQVLVTDERVGILLFNLEGDVLAKINPADFRKLWSPVYHKEHILVLADAKNAENHWSRHVIKFTCQLEYVAKIECPSWLAECTILRERLSIAHNDHLYLCVCGEIFSGIYELTPIGQWTELEYKLSEAYIDMLAFATIGPITQLLVVEGRRNYVLLVSVRESRIVDRKRMAICERPGALAKDEAGRLFVSNRFSASIQLVDTMRWVSEKNVAITEAFVRHFTACWGLLAIPLKNAVRLQRYSFRSLR</sequence>
<keyword id="KW-1185">Reference proteome</keyword>
<organism>
    <name type="scientific">Caenorhabditis elegans</name>
    <dbReference type="NCBI Taxonomy" id="6239"/>
    <lineage>
        <taxon>Eukaryota</taxon>
        <taxon>Metazoa</taxon>
        <taxon>Ecdysozoa</taxon>
        <taxon>Nematoda</taxon>
        <taxon>Chromadorea</taxon>
        <taxon>Rhabditida</taxon>
        <taxon>Rhabditina</taxon>
        <taxon>Rhabditomorpha</taxon>
        <taxon>Rhabditoidea</taxon>
        <taxon>Rhabditidae</taxon>
        <taxon>Peloderinae</taxon>
        <taxon>Caenorhabditis</taxon>
    </lineage>
</organism>